<reference key="1">
    <citation type="journal article" date="2008" name="Genome Res.">
        <title>Genome sequence of the beta-rhizobium Cupriavidus taiwanensis and comparative genomics of rhizobia.</title>
        <authorList>
            <person name="Amadou C."/>
            <person name="Pascal G."/>
            <person name="Mangenot S."/>
            <person name="Glew M."/>
            <person name="Bontemps C."/>
            <person name="Capela D."/>
            <person name="Carrere S."/>
            <person name="Cruveiller S."/>
            <person name="Dossat C."/>
            <person name="Lajus A."/>
            <person name="Marchetti M."/>
            <person name="Poinsot V."/>
            <person name="Rouy Z."/>
            <person name="Servin B."/>
            <person name="Saad M."/>
            <person name="Schenowitz C."/>
            <person name="Barbe V."/>
            <person name="Batut J."/>
            <person name="Medigue C."/>
            <person name="Masson-Boivin C."/>
        </authorList>
    </citation>
    <scope>NUCLEOTIDE SEQUENCE [LARGE SCALE GENOMIC DNA]</scope>
    <source>
        <strain>DSM 17343 / BCRC 17206 / CCUG 44338 / CIP 107171 / LMG 19424 / R1</strain>
    </source>
</reference>
<accession>B3R7J7</accession>
<evidence type="ECO:0000255" key="1">
    <source>
        <dbReference type="HAMAP-Rule" id="MF_00259"/>
    </source>
</evidence>
<sequence>MTLQATPLNAIHRALGARMVDFGGWDMPVNYGSQIEEHHAVRNDAGMFDVSHMCVVDLAGPNTRAFLRGLLANNVDKLQTPGKALYSCMLDEHGGVIDDLIVYFFAEDRFRLVVNAGTAVGDIDWIRARNEATGSGVTITPRREDVAPAGVPPLAIVAVQGPNARAKVWSTFPSTQPSDALKPFNAVVVQDPALGEVMVARTGYTGEDGFELVVPAASVAGLWEKLQAAGVRPAGLGARDTLRLEAGMNLYGQDMDIKVSPLDAGLAWTVDLQSERDFTGKAALAAAGSRQQFLGLILRDKGGVLRAHQKVITPAGDGEITSGTFSPSLSQSIAFARLPQGVNVGDTVQVEIRDRKLNATVVKLPFVRHGKALVS</sequence>
<protein>
    <recommendedName>
        <fullName evidence="1">Aminomethyltransferase</fullName>
        <ecNumber evidence="1">2.1.2.10</ecNumber>
    </recommendedName>
    <alternativeName>
        <fullName evidence="1">Glycine cleavage system T protein</fullName>
    </alternativeName>
</protein>
<comment type="function">
    <text evidence="1">The glycine cleavage system catalyzes the degradation of glycine.</text>
</comment>
<comment type="catalytic activity">
    <reaction evidence="1">
        <text>N(6)-[(R)-S(8)-aminomethyldihydrolipoyl]-L-lysyl-[protein] + (6S)-5,6,7,8-tetrahydrofolate = N(6)-[(R)-dihydrolipoyl]-L-lysyl-[protein] + (6R)-5,10-methylene-5,6,7,8-tetrahydrofolate + NH4(+)</text>
        <dbReference type="Rhea" id="RHEA:16945"/>
        <dbReference type="Rhea" id="RHEA-COMP:10475"/>
        <dbReference type="Rhea" id="RHEA-COMP:10492"/>
        <dbReference type="ChEBI" id="CHEBI:15636"/>
        <dbReference type="ChEBI" id="CHEBI:28938"/>
        <dbReference type="ChEBI" id="CHEBI:57453"/>
        <dbReference type="ChEBI" id="CHEBI:83100"/>
        <dbReference type="ChEBI" id="CHEBI:83143"/>
        <dbReference type="EC" id="2.1.2.10"/>
    </reaction>
</comment>
<comment type="subunit">
    <text evidence="1">The glycine cleavage system is composed of four proteins: P, T, L and H.</text>
</comment>
<comment type="similarity">
    <text evidence="1">Belongs to the GcvT family.</text>
</comment>
<dbReference type="EC" id="2.1.2.10" evidence="1"/>
<dbReference type="EMBL" id="CU633749">
    <property type="protein sequence ID" value="CAQ70994.1"/>
    <property type="molecule type" value="Genomic_DNA"/>
</dbReference>
<dbReference type="RefSeq" id="WP_012354260.1">
    <property type="nucleotide sequence ID" value="NC_010528.1"/>
</dbReference>
<dbReference type="SMR" id="B3R7J7"/>
<dbReference type="GeneID" id="29760217"/>
<dbReference type="KEGG" id="cti:RALTA_A3074"/>
<dbReference type="eggNOG" id="COG0404">
    <property type="taxonomic scope" value="Bacteria"/>
</dbReference>
<dbReference type="HOGENOM" id="CLU_007884_10_2_4"/>
<dbReference type="BioCyc" id="CTAI977880:RALTA_RS15030-MONOMER"/>
<dbReference type="Proteomes" id="UP000001692">
    <property type="component" value="Chromosome 1"/>
</dbReference>
<dbReference type="GO" id="GO:0005829">
    <property type="term" value="C:cytosol"/>
    <property type="evidence" value="ECO:0007669"/>
    <property type="project" value="TreeGrafter"/>
</dbReference>
<dbReference type="GO" id="GO:0005960">
    <property type="term" value="C:glycine cleavage complex"/>
    <property type="evidence" value="ECO:0007669"/>
    <property type="project" value="InterPro"/>
</dbReference>
<dbReference type="GO" id="GO:0004047">
    <property type="term" value="F:aminomethyltransferase activity"/>
    <property type="evidence" value="ECO:0007669"/>
    <property type="project" value="UniProtKB-UniRule"/>
</dbReference>
<dbReference type="GO" id="GO:0008483">
    <property type="term" value="F:transaminase activity"/>
    <property type="evidence" value="ECO:0007669"/>
    <property type="project" value="UniProtKB-KW"/>
</dbReference>
<dbReference type="GO" id="GO:0019464">
    <property type="term" value="P:glycine decarboxylation via glycine cleavage system"/>
    <property type="evidence" value="ECO:0007669"/>
    <property type="project" value="UniProtKB-UniRule"/>
</dbReference>
<dbReference type="FunFam" id="3.30.70.1400:FF:000001">
    <property type="entry name" value="Aminomethyltransferase"/>
    <property type="match status" value="1"/>
</dbReference>
<dbReference type="FunFam" id="4.10.1250.10:FF:000001">
    <property type="entry name" value="Aminomethyltransferase"/>
    <property type="match status" value="1"/>
</dbReference>
<dbReference type="Gene3D" id="2.40.30.110">
    <property type="entry name" value="Aminomethyltransferase beta-barrel domains"/>
    <property type="match status" value="1"/>
</dbReference>
<dbReference type="Gene3D" id="3.30.70.1400">
    <property type="entry name" value="Aminomethyltransferase beta-barrel domains"/>
    <property type="match status" value="1"/>
</dbReference>
<dbReference type="Gene3D" id="4.10.1250.10">
    <property type="entry name" value="Aminomethyltransferase fragment"/>
    <property type="match status" value="1"/>
</dbReference>
<dbReference type="Gene3D" id="3.30.1360.120">
    <property type="entry name" value="Probable tRNA modification gtpase trme, domain 1"/>
    <property type="match status" value="1"/>
</dbReference>
<dbReference type="HAMAP" id="MF_00259">
    <property type="entry name" value="GcvT"/>
    <property type="match status" value="1"/>
</dbReference>
<dbReference type="InterPro" id="IPR006223">
    <property type="entry name" value="GCS_T"/>
</dbReference>
<dbReference type="InterPro" id="IPR022903">
    <property type="entry name" value="GCS_T_bac"/>
</dbReference>
<dbReference type="InterPro" id="IPR013977">
    <property type="entry name" value="GCST_C"/>
</dbReference>
<dbReference type="InterPro" id="IPR006222">
    <property type="entry name" value="GCV_T_N"/>
</dbReference>
<dbReference type="InterPro" id="IPR028896">
    <property type="entry name" value="GcvT/YgfZ/DmdA"/>
</dbReference>
<dbReference type="InterPro" id="IPR029043">
    <property type="entry name" value="GcvT/YgfZ_C"/>
</dbReference>
<dbReference type="InterPro" id="IPR027266">
    <property type="entry name" value="TrmE/GcvT_dom1"/>
</dbReference>
<dbReference type="NCBIfam" id="TIGR00528">
    <property type="entry name" value="gcvT"/>
    <property type="match status" value="1"/>
</dbReference>
<dbReference type="NCBIfam" id="NF001567">
    <property type="entry name" value="PRK00389.1"/>
    <property type="match status" value="1"/>
</dbReference>
<dbReference type="PANTHER" id="PTHR43757">
    <property type="entry name" value="AMINOMETHYLTRANSFERASE"/>
    <property type="match status" value="1"/>
</dbReference>
<dbReference type="PANTHER" id="PTHR43757:SF2">
    <property type="entry name" value="AMINOMETHYLTRANSFERASE, MITOCHONDRIAL"/>
    <property type="match status" value="1"/>
</dbReference>
<dbReference type="Pfam" id="PF01571">
    <property type="entry name" value="GCV_T"/>
    <property type="match status" value="1"/>
</dbReference>
<dbReference type="Pfam" id="PF08669">
    <property type="entry name" value="GCV_T_C"/>
    <property type="match status" value="1"/>
</dbReference>
<dbReference type="PIRSF" id="PIRSF006487">
    <property type="entry name" value="GcvT"/>
    <property type="match status" value="1"/>
</dbReference>
<dbReference type="SUPFAM" id="SSF101790">
    <property type="entry name" value="Aminomethyltransferase beta-barrel domain"/>
    <property type="match status" value="1"/>
</dbReference>
<dbReference type="SUPFAM" id="SSF103025">
    <property type="entry name" value="Folate-binding domain"/>
    <property type="match status" value="1"/>
</dbReference>
<proteinExistence type="inferred from homology"/>
<name>GCST_CUPTR</name>
<organism>
    <name type="scientific">Cupriavidus taiwanensis (strain DSM 17343 / BCRC 17206 / CCUG 44338 / CIP 107171 / LMG 19424 / R1)</name>
    <name type="common">Ralstonia taiwanensis (strain LMG 19424)</name>
    <dbReference type="NCBI Taxonomy" id="977880"/>
    <lineage>
        <taxon>Bacteria</taxon>
        <taxon>Pseudomonadati</taxon>
        <taxon>Pseudomonadota</taxon>
        <taxon>Betaproteobacteria</taxon>
        <taxon>Burkholderiales</taxon>
        <taxon>Burkholderiaceae</taxon>
        <taxon>Cupriavidus</taxon>
    </lineage>
</organism>
<gene>
    <name evidence="1" type="primary">gcvT</name>
    <name type="ordered locus">RALTA_A3074</name>
</gene>
<feature type="chain" id="PRO_1000114091" description="Aminomethyltransferase">
    <location>
        <begin position="1"/>
        <end position="375"/>
    </location>
</feature>
<keyword id="KW-0032">Aminotransferase</keyword>
<keyword id="KW-0808">Transferase</keyword>